<comment type="function">
    <text evidence="2 3 4">Transposase-derived protein that may have nuclease activity (Potential). Does not have transposase activity.</text>
</comment>
<comment type="cofactor">
    <cofactor evidence="4">
        <name>a divalent metal cation</name>
        <dbReference type="ChEBI" id="CHEBI:60240"/>
    </cofactor>
</comment>
<comment type="subunit">
    <text evidence="3">Interacts with NAIF1.</text>
</comment>
<comment type="interaction">
    <interactant intactId="EBI-21891462">
        <id>Q96MB7</id>
    </interactant>
    <interactant intactId="EBI-10249231">
        <id>Q69YI7</id>
        <label>NAIF1</label>
    </interactant>
    <organismsDiffer>false</organismsDiffer>
    <experiments>2</experiments>
</comment>
<comment type="subcellular location">
    <subcellularLocation>
        <location evidence="3">Nucleus</location>
    </subcellularLocation>
    <subcellularLocation>
        <location evidence="3">Cytoplasm</location>
    </subcellularLocation>
    <text>Interaction with NAIF1 promotes translocation to the nucleus.</text>
</comment>
<comment type="tissue specificity">
    <text evidence="2">Detected in brain, eye, nerve tissue, kidney and lung.</text>
</comment>
<comment type="similarity">
    <text evidence="4">Belongs to the HARBI1 family.</text>
</comment>
<feature type="chain" id="PRO_0000263614" description="Putative nuclease HARBI1">
    <location>
        <begin position="1"/>
        <end position="349"/>
    </location>
</feature>
<feature type="domain" description="DDE Tnp4" evidence="1">
    <location>
        <begin position="148"/>
        <end position="300"/>
    </location>
</feature>
<feature type="binding site" evidence="1">
    <location>
        <position position="149"/>
    </location>
    <ligand>
        <name>a divalent metal cation</name>
        <dbReference type="ChEBI" id="CHEBI:60240"/>
    </ligand>
</feature>
<feature type="binding site" evidence="1">
    <location>
        <position position="199"/>
    </location>
    <ligand>
        <name>a divalent metal cation</name>
        <dbReference type="ChEBI" id="CHEBI:60240"/>
    </ligand>
</feature>
<feature type="binding site" evidence="1">
    <location>
        <position position="225"/>
    </location>
    <ligand>
        <name>a divalent metal cation</name>
        <dbReference type="ChEBI" id="CHEBI:60240"/>
    </ligand>
</feature>
<feature type="binding site" evidence="1">
    <location>
        <position position="261"/>
    </location>
    <ligand>
        <name>a divalent metal cation</name>
        <dbReference type="ChEBI" id="CHEBI:60240"/>
    </ligand>
</feature>
<accession>Q96MB7</accession>
<accession>D3DQP9</accession>
<gene>
    <name type="primary">HARBI1</name>
    <name type="synonym">C11orf77</name>
</gene>
<reference key="1">
    <citation type="journal article" date="2004" name="Nat. Genet.">
        <title>Complete sequencing and characterization of 21,243 full-length human cDNAs.</title>
        <authorList>
            <person name="Ota T."/>
            <person name="Suzuki Y."/>
            <person name="Nishikawa T."/>
            <person name="Otsuki T."/>
            <person name="Sugiyama T."/>
            <person name="Irie R."/>
            <person name="Wakamatsu A."/>
            <person name="Hayashi K."/>
            <person name="Sato H."/>
            <person name="Nagai K."/>
            <person name="Kimura K."/>
            <person name="Makita H."/>
            <person name="Sekine M."/>
            <person name="Obayashi M."/>
            <person name="Nishi T."/>
            <person name="Shibahara T."/>
            <person name="Tanaka T."/>
            <person name="Ishii S."/>
            <person name="Yamamoto J."/>
            <person name="Saito K."/>
            <person name="Kawai Y."/>
            <person name="Isono Y."/>
            <person name="Nakamura Y."/>
            <person name="Nagahari K."/>
            <person name="Murakami K."/>
            <person name="Yasuda T."/>
            <person name="Iwayanagi T."/>
            <person name="Wagatsuma M."/>
            <person name="Shiratori A."/>
            <person name="Sudo H."/>
            <person name="Hosoiri T."/>
            <person name="Kaku Y."/>
            <person name="Kodaira H."/>
            <person name="Kondo H."/>
            <person name="Sugawara M."/>
            <person name="Takahashi M."/>
            <person name="Kanda K."/>
            <person name="Yokoi T."/>
            <person name="Furuya T."/>
            <person name="Kikkawa E."/>
            <person name="Omura Y."/>
            <person name="Abe K."/>
            <person name="Kamihara K."/>
            <person name="Katsuta N."/>
            <person name="Sato K."/>
            <person name="Tanikawa M."/>
            <person name="Yamazaki M."/>
            <person name="Ninomiya K."/>
            <person name="Ishibashi T."/>
            <person name="Yamashita H."/>
            <person name="Murakawa K."/>
            <person name="Fujimori K."/>
            <person name="Tanai H."/>
            <person name="Kimata M."/>
            <person name="Watanabe M."/>
            <person name="Hiraoka S."/>
            <person name="Chiba Y."/>
            <person name="Ishida S."/>
            <person name="Ono Y."/>
            <person name="Takiguchi S."/>
            <person name="Watanabe S."/>
            <person name="Yosida M."/>
            <person name="Hotuta T."/>
            <person name="Kusano J."/>
            <person name="Kanehori K."/>
            <person name="Takahashi-Fujii A."/>
            <person name="Hara H."/>
            <person name="Tanase T.-O."/>
            <person name="Nomura Y."/>
            <person name="Togiya S."/>
            <person name="Komai F."/>
            <person name="Hara R."/>
            <person name="Takeuchi K."/>
            <person name="Arita M."/>
            <person name="Imose N."/>
            <person name="Musashino K."/>
            <person name="Yuuki H."/>
            <person name="Oshima A."/>
            <person name="Sasaki N."/>
            <person name="Aotsuka S."/>
            <person name="Yoshikawa Y."/>
            <person name="Matsunawa H."/>
            <person name="Ichihara T."/>
            <person name="Shiohata N."/>
            <person name="Sano S."/>
            <person name="Moriya S."/>
            <person name="Momiyama H."/>
            <person name="Satoh N."/>
            <person name="Takami S."/>
            <person name="Terashima Y."/>
            <person name="Suzuki O."/>
            <person name="Nakagawa S."/>
            <person name="Senoh A."/>
            <person name="Mizoguchi H."/>
            <person name="Goto Y."/>
            <person name="Shimizu F."/>
            <person name="Wakebe H."/>
            <person name="Hishigaki H."/>
            <person name="Watanabe T."/>
            <person name="Sugiyama A."/>
            <person name="Takemoto M."/>
            <person name="Kawakami B."/>
            <person name="Yamazaki M."/>
            <person name="Watanabe K."/>
            <person name="Kumagai A."/>
            <person name="Itakura S."/>
            <person name="Fukuzumi Y."/>
            <person name="Fujimori Y."/>
            <person name="Komiyama M."/>
            <person name="Tashiro H."/>
            <person name="Tanigami A."/>
            <person name="Fujiwara T."/>
            <person name="Ono T."/>
            <person name="Yamada K."/>
            <person name="Fujii Y."/>
            <person name="Ozaki K."/>
            <person name="Hirao M."/>
            <person name="Ohmori Y."/>
            <person name="Kawabata A."/>
            <person name="Hikiji T."/>
            <person name="Kobatake N."/>
            <person name="Inagaki H."/>
            <person name="Ikema Y."/>
            <person name="Okamoto S."/>
            <person name="Okitani R."/>
            <person name="Kawakami T."/>
            <person name="Noguchi S."/>
            <person name="Itoh T."/>
            <person name="Shigeta K."/>
            <person name="Senba T."/>
            <person name="Matsumura K."/>
            <person name="Nakajima Y."/>
            <person name="Mizuno T."/>
            <person name="Morinaga M."/>
            <person name="Sasaki M."/>
            <person name="Togashi T."/>
            <person name="Oyama M."/>
            <person name="Hata H."/>
            <person name="Watanabe M."/>
            <person name="Komatsu T."/>
            <person name="Mizushima-Sugano J."/>
            <person name="Satoh T."/>
            <person name="Shirai Y."/>
            <person name="Takahashi Y."/>
            <person name="Nakagawa K."/>
            <person name="Okumura K."/>
            <person name="Nagase T."/>
            <person name="Nomura N."/>
            <person name="Kikuchi H."/>
            <person name="Masuho Y."/>
            <person name="Yamashita R."/>
            <person name="Nakai K."/>
            <person name="Yada T."/>
            <person name="Nakamura Y."/>
            <person name="Ohara O."/>
            <person name="Isogai T."/>
            <person name="Sugano S."/>
        </authorList>
    </citation>
    <scope>NUCLEOTIDE SEQUENCE [LARGE SCALE MRNA]</scope>
    <source>
        <tissue>Testis</tissue>
    </source>
</reference>
<reference key="2">
    <citation type="submission" date="2005-09" db="EMBL/GenBank/DDBJ databases">
        <authorList>
            <person name="Mural R.J."/>
            <person name="Istrail S."/>
            <person name="Sutton G.G."/>
            <person name="Florea L."/>
            <person name="Halpern A.L."/>
            <person name="Mobarry C.M."/>
            <person name="Lippert R."/>
            <person name="Walenz B."/>
            <person name="Shatkay H."/>
            <person name="Dew I."/>
            <person name="Miller J.R."/>
            <person name="Flanigan M.J."/>
            <person name="Edwards N.J."/>
            <person name="Bolanos R."/>
            <person name="Fasulo D."/>
            <person name="Halldorsson B.V."/>
            <person name="Hannenhalli S."/>
            <person name="Turner R."/>
            <person name="Yooseph S."/>
            <person name="Lu F."/>
            <person name="Nusskern D.R."/>
            <person name="Shue B.C."/>
            <person name="Zheng X.H."/>
            <person name="Zhong F."/>
            <person name="Delcher A.L."/>
            <person name="Huson D.H."/>
            <person name="Kravitz S.A."/>
            <person name="Mouchard L."/>
            <person name="Reinert K."/>
            <person name="Remington K.A."/>
            <person name="Clark A.G."/>
            <person name="Waterman M.S."/>
            <person name="Eichler E.E."/>
            <person name="Adams M.D."/>
            <person name="Hunkapiller M.W."/>
            <person name="Myers E.W."/>
            <person name="Venter J.C."/>
        </authorList>
    </citation>
    <scope>NUCLEOTIDE SEQUENCE [LARGE SCALE GENOMIC DNA]</scope>
</reference>
<reference key="3">
    <citation type="journal article" date="2004" name="Genome Res.">
        <title>The status, quality, and expansion of the NIH full-length cDNA project: the Mammalian Gene Collection (MGC).</title>
        <authorList>
            <consortium name="The MGC Project Team"/>
        </authorList>
    </citation>
    <scope>NUCLEOTIDE SEQUENCE [LARGE SCALE MRNA]</scope>
    <source>
        <tissue>Pancreas</tissue>
    </source>
</reference>
<reference key="4">
    <citation type="journal article" date="2004" name="DNA Cell Biol.">
        <title>Harbinger transposons and an ancient HARBI1 gene derived from a transposase.</title>
        <authorList>
            <person name="Kapitonov V.V."/>
            <person name="Jurka J."/>
        </authorList>
    </citation>
    <scope>FUNCTION</scope>
    <scope>COFACTOR</scope>
    <scope>TISSUE SPECIFICITY</scope>
</reference>
<reference key="5">
    <citation type="journal article" date="2008" name="Proc. Natl. Acad. Sci. U.S.A.">
        <title>Transposition of a reconstructed Harbinger element in human cells and functional homology with two transposon-derived cellular genes.</title>
        <authorList>
            <person name="Sinzelle L."/>
            <person name="Kapitonov V.V."/>
            <person name="Grzela D.P."/>
            <person name="Jursch T."/>
            <person name="Jurka J."/>
            <person name="Izsvak Z."/>
            <person name="Ivics Z."/>
        </authorList>
    </citation>
    <scope>FUNCTION</scope>
    <scope>INTERACTION WITH NAIF1</scope>
    <scope>SUBCELLULAR LOCATION</scope>
</reference>
<protein>
    <recommendedName>
        <fullName>Putative nuclease HARBI1</fullName>
        <ecNumber>3.1.-.-</ecNumber>
    </recommendedName>
    <alternativeName>
        <fullName>Harbinger transposase-derived nuclease</fullName>
    </alternativeName>
</protein>
<evidence type="ECO:0000255" key="1"/>
<evidence type="ECO:0000269" key="2">
    <source>
    </source>
</evidence>
<evidence type="ECO:0000269" key="3">
    <source>
    </source>
</evidence>
<evidence type="ECO:0000305" key="4"/>
<name>HARB1_HUMAN</name>
<organism>
    <name type="scientific">Homo sapiens</name>
    <name type="common">Human</name>
    <dbReference type="NCBI Taxonomy" id="9606"/>
    <lineage>
        <taxon>Eukaryota</taxon>
        <taxon>Metazoa</taxon>
        <taxon>Chordata</taxon>
        <taxon>Craniata</taxon>
        <taxon>Vertebrata</taxon>
        <taxon>Euteleostomi</taxon>
        <taxon>Mammalia</taxon>
        <taxon>Eutheria</taxon>
        <taxon>Euarchontoglires</taxon>
        <taxon>Primates</taxon>
        <taxon>Haplorrhini</taxon>
        <taxon>Catarrhini</taxon>
        <taxon>Hominidae</taxon>
        <taxon>Homo</taxon>
    </lineage>
</organism>
<sequence length="349" mass="39146">MAIPITVLDCDLLLYGRGHRTLDRFKLDDVTDEYLMSMYGFPRQFIYYLVELLGANLSRPTQRSRAISPETQVLAALGFYTSGSFQTRMGDAIGISQASMSRCVANVTEALVERASQFIRFPADEASIQALKDEFYGLAGMPGVMGVVDCIHVAIKAPNAEDLSYVNRKGLHSLNCLMVCDIRGTLMTVETNWPGSLQDCAVLQQSSLSSQFEAGMHKDSWLLGDSSFFLRTWLMTPLHIPETPAEYRYNMAHSATHSVIEKTFRTLCSRFRCLDGSKGALQYSPEKSSHIILACCVLHNISLEHGMDVWSSPMTGPMEQPPEEEYEHMESLDLEADRIRQELMLTHFS</sequence>
<dbReference type="EC" id="3.1.-.-"/>
<dbReference type="EMBL" id="AK057237">
    <property type="protein sequence ID" value="BAB71391.1"/>
    <property type="molecule type" value="mRNA"/>
</dbReference>
<dbReference type="EMBL" id="CH471064">
    <property type="protein sequence ID" value="EAW67992.1"/>
    <property type="molecule type" value="Genomic_DNA"/>
</dbReference>
<dbReference type="EMBL" id="CH471064">
    <property type="protein sequence ID" value="EAW67993.1"/>
    <property type="molecule type" value="Genomic_DNA"/>
</dbReference>
<dbReference type="EMBL" id="CH471064">
    <property type="protein sequence ID" value="EAW67994.1"/>
    <property type="molecule type" value="Genomic_DNA"/>
</dbReference>
<dbReference type="EMBL" id="BC036925">
    <property type="protein sequence ID" value="AAH36925.1"/>
    <property type="molecule type" value="mRNA"/>
</dbReference>
<dbReference type="CCDS" id="CCDS7920.1"/>
<dbReference type="RefSeq" id="NP_776172.1">
    <property type="nucleotide sequence ID" value="NM_173811.4"/>
</dbReference>
<dbReference type="RefSeq" id="XP_016873093.1">
    <property type="nucleotide sequence ID" value="XM_017017604.2"/>
</dbReference>
<dbReference type="RefSeq" id="XP_016873094.1">
    <property type="nucleotide sequence ID" value="XM_017017605.3"/>
</dbReference>
<dbReference type="RefSeq" id="XP_016873095.1">
    <property type="nucleotide sequence ID" value="XM_017017606.1"/>
</dbReference>
<dbReference type="RefSeq" id="XP_024304221.1">
    <property type="nucleotide sequence ID" value="XM_024448453.2"/>
</dbReference>
<dbReference type="RefSeq" id="XP_047282785.1">
    <property type="nucleotide sequence ID" value="XM_047426829.1"/>
</dbReference>
<dbReference type="RefSeq" id="XP_054224516.1">
    <property type="nucleotide sequence ID" value="XM_054368541.1"/>
</dbReference>
<dbReference type="RefSeq" id="XP_054224517.1">
    <property type="nucleotide sequence ID" value="XM_054368542.1"/>
</dbReference>
<dbReference type="RefSeq" id="XP_054224518.1">
    <property type="nucleotide sequence ID" value="XM_054368543.1"/>
</dbReference>
<dbReference type="RefSeq" id="XP_054224519.1">
    <property type="nucleotide sequence ID" value="XM_054368544.1"/>
</dbReference>
<dbReference type="SMR" id="Q96MB7"/>
<dbReference type="BioGRID" id="129511">
    <property type="interactions" value="2"/>
</dbReference>
<dbReference type="FunCoup" id="Q96MB7">
    <property type="interactions" value="216"/>
</dbReference>
<dbReference type="IntAct" id="Q96MB7">
    <property type="interactions" value="1"/>
</dbReference>
<dbReference type="STRING" id="9606.ENSP00000317743"/>
<dbReference type="GlyGen" id="Q96MB7">
    <property type="glycosylation" value="1 site, 1 O-linked glycan (1 site)"/>
</dbReference>
<dbReference type="iPTMnet" id="Q96MB7"/>
<dbReference type="PhosphoSitePlus" id="Q96MB7"/>
<dbReference type="BioMuta" id="HARBI1"/>
<dbReference type="DMDM" id="74732341"/>
<dbReference type="jPOST" id="Q96MB7"/>
<dbReference type="MassIVE" id="Q96MB7"/>
<dbReference type="PaxDb" id="9606-ENSP00000317743"/>
<dbReference type="PeptideAtlas" id="Q96MB7"/>
<dbReference type="ProteomicsDB" id="77328"/>
<dbReference type="Antibodypedia" id="42871">
    <property type="antibodies" value="90 antibodies from 18 providers"/>
</dbReference>
<dbReference type="DNASU" id="283254"/>
<dbReference type="Ensembl" id="ENST00000326737.3">
    <property type="protein sequence ID" value="ENSP00000317743.3"/>
    <property type="gene ID" value="ENSG00000180423.4"/>
</dbReference>
<dbReference type="GeneID" id="283254"/>
<dbReference type="KEGG" id="hsa:283254"/>
<dbReference type="MANE-Select" id="ENST00000326737.3">
    <property type="protein sequence ID" value="ENSP00000317743.3"/>
    <property type="RefSeq nucleotide sequence ID" value="NM_173811.4"/>
    <property type="RefSeq protein sequence ID" value="NP_776172.1"/>
</dbReference>
<dbReference type="UCSC" id="uc001ncy.4">
    <property type="organism name" value="human"/>
</dbReference>
<dbReference type="AGR" id="HGNC:26522"/>
<dbReference type="CTD" id="283254"/>
<dbReference type="DisGeNET" id="283254"/>
<dbReference type="GeneCards" id="HARBI1"/>
<dbReference type="HGNC" id="HGNC:26522">
    <property type="gene designation" value="HARBI1"/>
</dbReference>
<dbReference type="HPA" id="ENSG00000180423">
    <property type="expression patterns" value="Tissue enhanced (testis)"/>
</dbReference>
<dbReference type="MIM" id="615086">
    <property type="type" value="gene"/>
</dbReference>
<dbReference type="neXtProt" id="NX_Q96MB7"/>
<dbReference type="OpenTargets" id="ENSG00000180423"/>
<dbReference type="PharmGKB" id="PA162390577"/>
<dbReference type="VEuPathDB" id="HostDB:ENSG00000180423"/>
<dbReference type="eggNOG" id="KOG4585">
    <property type="taxonomic scope" value="Eukaryota"/>
</dbReference>
<dbReference type="GeneTree" id="ENSGT00940000154348"/>
<dbReference type="HOGENOM" id="CLU_018552_13_0_1"/>
<dbReference type="InParanoid" id="Q96MB7"/>
<dbReference type="OMA" id="AEPNCKV"/>
<dbReference type="OrthoDB" id="10062286at2759"/>
<dbReference type="PAN-GO" id="Q96MB7">
    <property type="GO annotations" value="0 GO annotations based on evolutionary models"/>
</dbReference>
<dbReference type="PhylomeDB" id="Q96MB7"/>
<dbReference type="TreeFam" id="TF327972"/>
<dbReference type="PathwayCommons" id="Q96MB7"/>
<dbReference type="SignaLink" id="Q96MB7"/>
<dbReference type="BioGRID-ORCS" id="283254">
    <property type="hits" value="15 hits in 1161 CRISPR screens"/>
</dbReference>
<dbReference type="ChiTaRS" id="HARBI1">
    <property type="organism name" value="human"/>
</dbReference>
<dbReference type="GenomeRNAi" id="283254"/>
<dbReference type="Pharos" id="Q96MB7">
    <property type="development level" value="Tbio"/>
</dbReference>
<dbReference type="PRO" id="PR:Q96MB7"/>
<dbReference type="Proteomes" id="UP000005640">
    <property type="component" value="Chromosome 11"/>
</dbReference>
<dbReference type="RNAct" id="Q96MB7">
    <property type="molecule type" value="protein"/>
</dbReference>
<dbReference type="Bgee" id="ENSG00000180423">
    <property type="expression patterns" value="Expressed in primordial germ cell in gonad and 116 other cell types or tissues"/>
</dbReference>
<dbReference type="ExpressionAtlas" id="Q96MB7">
    <property type="expression patterns" value="baseline and differential"/>
</dbReference>
<dbReference type="GO" id="GO:0034451">
    <property type="term" value="C:centriolar satellite"/>
    <property type="evidence" value="ECO:0000314"/>
    <property type="project" value="HPA"/>
</dbReference>
<dbReference type="GO" id="GO:0005829">
    <property type="term" value="C:cytosol"/>
    <property type="evidence" value="ECO:0000314"/>
    <property type="project" value="HPA"/>
</dbReference>
<dbReference type="GO" id="GO:0005634">
    <property type="term" value="C:nucleus"/>
    <property type="evidence" value="ECO:0007669"/>
    <property type="project" value="UniProtKB-SubCell"/>
</dbReference>
<dbReference type="GO" id="GO:0005886">
    <property type="term" value="C:plasma membrane"/>
    <property type="evidence" value="ECO:0000314"/>
    <property type="project" value="HPA"/>
</dbReference>
<dbReference type="GO" id="GO:0046872">
    <property type="term" value="F:metal ion binding"/>
    <property type="evidence" value="ECO:0007669"/>
    <property type="project" value="UniProtKB-KW"/>
</dbReference>
<dbReference type="GO" id="GO:0004518">
    <property type="term" value="F:nuclease activity"/>
    <property type="evidence" value="ECO:0007669"/>
    <property type="project" value="UniProtKB-KW"/>
</dbReference>
<dbReference type="InterPro" id="IPR045249">
    <property type="entry name" value="HARBI1-like"/>
</dbReference>
<dbReference type="InterPro" id="IPR026103">
    <property type="entry name" value="HARBI1_animal"/>
</dbReference>
<dbReference type="InterPro" id="IPR027806">
    <property type="entry name" value="HARBI1_dom"/>
</dbReference>
<dbReference type="PANTHER" id="PTHR22930">
    <property type="match status" value="1"/>
</dbReference>
<dbReference type="PANTHER" id="PTHR22930:SF253">
    <property type="entry name" value="NUCLEASE HARBI1-RELATED"/>
    <property type="match status" value="1"/>
</dbReference>
<dbReference type="Pfam" id="PF13359">
    <property type="entry name" value="DDE_Tnp_4"/>
    <property type="match status" value="1"/>
</dbReference>
<dbReference type="PRINTS" id="PR02086">
    <property type="entry name" value="PUTNUCHARBI1"/>
</dbReference>
<keyword id="KW-0963">Cytoplasm</keyword>
<keyword id="KW-0378">Hydrolase</keyword>
<keyword id="KW-0479">Metal-binding</keyword>
<keyword id="KW-0540">Nuclease</keyword>
<keyword id="KW-0539">Nucleus</keyword>
<keyword id="KW-1267">Proteomics identification</keyword>
<keyword id="KW-1185">Reference proteome</keyword>
<proteinExistence type="evidence at protein level"/>